<evidence type="ECO:0000250" key="1">
    <source>
        <dbReference type="UniProtKB" id="Q8C263"/>
    </source>
</evidence>
<evidence type="ECO:0000250" key="2">
    <source>
        <dbReference type="UniProtKB" id="Q8IX90"/>
    </source>
</evidence>
<evidence type="ECO:0000256" key="3">
    <source>
        <dbReference type="SAM" id="MobiDB-lite"/>
    </source>
</evidence>
<evidence type="ECO:0000269" key="4">
    <source>
    </source>
</evidence>
<evidence type="ECO:0000305" key="5"/>
<feature type="chain" id="PRO_0000373898" description="SKA complex subunit 3">
    <location>
        <begin position="1"/>
        <end position="495"/>
    </location>
</feature>
<feature type="region of interest" description="Disordered" evidence="3">
    <location>
        <begin position="119"/>
        <end position="165"/>
    </location>
</feature>
<feature type="region of interest" description="Disordered" evidence="3">
    <location>
        <begin position="355"/>
        <end position="391"/>
    </location>
</feature>
<feature type="compositionally biased region" description="Basic and acidic residues" evidence="3">
    <location>
        <begin position="119"/>
        <end position="135"/>
    </location>
</feature>
<feature type="compositionally biased region" description="Basic and acidic residues" evidence="3">
    <location>
        <begin position="355"/>
        <end position="368"/>
    </location>
</feature>
<feature type="compositionally biased region" description="Polar residues" evidence="3">
    <location>
        <begin position="378"/>
        <end position="387"/>
    </location>
</feature>
<feature type="modified residue" description="Phosphoserine" evidence="4">
    <location>
        <position position="295"/>
    </location>
</feature>
<feature type="sequence conflict" description="In Ref. 1; AAH91849." evidence="5" ref="1">
    <original>E</original>
    <variation>G</variation>
    <location>
        <position position="37"/>
    </location>
</feature>
<protein>
    <recommendedName>
        <fullName evidence="5">SKA complex subunit 3</fullName>
    </recommendedName>
    <alternativeName>
        <fullName>Spindle and kinetochore-associated protein 3</fullName>
    </alternativeName>
</protein>
<accession>Q58EL7</accession>
<reference key="1">
    <citation type="submission" date="2005-03" db="EMBL/GenBank/DDBJ databases">
        <authorList>
            <consortium name="NIH - Zebrafish Gene Collection (ZGC) project"/>
        </authorList>
    </citation>
    <scope>NUCLEOTIDE SEQUENCE [LARGE SCALE MRNA]</scope>
    <source>
        <tissue>Embryo</tissue>
    </source>
</reference>
<reference key="2">
    <citation type="journal article" date="2008" name="J. Proteome Res.">
        <title>Online automated in vivo zebrafish phosphoproteomics: from large-scale analysis down to a single embryo.</title>
        <authorList>
            <person name="Lemeer S."/>
            <person name="Pinkse M.W.H."/>
            <person name="Mohammed S."/>
            <person name="van Breukelen B."/>
            <person name="den Hertog J."/>
            <person name="Slijper M."/>
            <person name="Heck A.J.R."/>
        </authorList>
    </citation>
    <scope>PHOSPHORYLATION [LARGE SCALE ANALYSIS] AT SER-295</scope>
    <scope>IDENTIFICATION BY MASS SPECTROMETRY</scope>
    <source>
        <tissue>Embryo</tissue>
    </source>
</reference>
<name>SKA3_DANRE</name>
<proteinExistence type="evidence at protein level"/>
<gene>
    <name type="primary">ska3</name>
    <name type="synonym">rama1</name>
</gene>
<sequence length="495" mass="55834">MNPSERFFSKLRKLTVYLETESSSLLHTSQNLKEDEEDEETGAQALYQLHSEVRALKRQVRDQVATHDTSSADLRSFIRRCLVLKQRTTEDIDSLKKHYEKYGYRPRISRLGSTEVNCTKEAEERAERDAEKLDAAEEDEETERGDCDKVDQSVTPEKMPPPVDQLQTPKLSDFGLSALQFQRVLGEAEVPLSAAPESAIALSSPPILMNLQPPQPKTPKCSLSMEEDALTPRLEDFGISEYTMCWNNDFTMDLFNKKPPKNRSERNENVLKPHNVFSNTSSVLNKDVANKSLESPEPPEFCTPGFKIAKNHVPSTPLFNGKNDLNSPPRLNNNCPSTPELPAFETPFVSKLIKKEDREEESKIHSESQENSLRLPDLSTTNGTSWNDAPEMPKMLRYEEEALPEMPILQSNFGSSLAFKNTSGESLSRMKTGAGHMLEMKQTSVPVPEDGFNQDWCLSTPKVRVKFPAEPCTPEMPDMSSVTQDILKLVAQCKY</sequence>
<dbReference type="EMBL" id="BC091849">
    <property type="protein sequence ID" value="AAH91849.1"/>
    <property type="molecule type" value="mRNA"/>
</dbReference>
<dbReference type="EMBL" id="CK675017">
    <property type="status" value="NOT_ANNOTATED_CDS"/>
    <property type="molecule type" value="mRNA"/>
</dbReference>
<dbReference type="SMR" id="Q58EL7"/>
<dbReference type="FunCoup" id="Q58EL7">
    <property type="interactions" value="2684"/>
</dbReference>
<dbReference type="STRING" id="7955.ENSDARP00000116579"/>
<dbReference type="iPTMnet" id="Q58EL7"/>
<dbReference type="PaxDb" id="7955-ENSDARP00000116579"/>
<dbReference type="AGR" id="ZFIN:ZDB-GENE-030131-2997"/>
<dbReference type="ZFIN" id="ZDB-GENE-030131-2997">
    <property type="gene designation" value="ska3"/>
</dbReference>
<dbReference type="eggNOG" id="ENOG502QSTX">
    <property type="taxonomic scope" value="Eukaryota"/>
</dbReference>
<dbReference type="InParanoid" id="Q58EL7"/>
<dbReference type="PhylomeDB" id="Q58EL7"/>
<dbReference type="PRO" id="PR:Q58EL7"/>
<dbReference type="Proteomes" id="UP000000437">
    <property type="component" value="Unplaced"/>
</dbReference>
<dbReference type="GO" id="GO:0005737">
    <property type="term" value="C:cytoplasm"/>
    <property type="evidence" value="ECO:0007669"/>
    <property type="project" value="UniProtKB-KW"/>
</dbReference>
<dbReference type="GO" id="GO:0000776">
    <property type="term" value="C:kinetochore"/>
    <property type="evidence" value="ECO:0000250"/>
    <property type="project" value="UniProtKB"/>
</dbReference>
<dbReference type="GO" id="GO:0072687">
    <property type="term" value="C:meiotic spindle"/>
    <property type="evidence" value="ECO:0000250"/>
    <property type="project" value="UniProtKB"/>
</dbReference>
<dbReference type="GO" id="GO:0072686">
    <property type="term" value="C:mitotic spindle"/>
    <property type="evidence" value="ECO:0000250"/>
    <property type="project" value="UniProtKB"/>
</dbReference>
<dbReference type="GO" id="GO:0000940">
    <property type="term" value="C:outer kinetochore"/>
    <property type="evidence" value="ECO:0000250"/>
    <property type="project" value="UniProtKB"/>
</dbReference>
<dbReference type="GO" id="GO:0005876">
    <property type="term" value="C:spindle microtubule"/>
    <property type="evidence" value="ECO:0000250"/>
    <property type="project" value="UniProtKB"/>
</dbReference>
<dbReference type="GO" id="GO:0008017">
    <property type="term" value="F:microtubule binding"/>
    <property type="evidence" value="ECO:0000250"/>
    <property type="project" value="UniProtKB"/>
</dbReference>
<dbReference type="GO" id="GO:0051315">
    <property type="term" value="P:attachment of mitotic spindle microtubules to kinetochore"/>
    <property type="evidence" value="ECO:0000250"/>
    <property type="project" value="UniProtKB"/>
</dbReference>
<dbReference type="GO" id="GO:0051301">
    <property type="term" value="P:cell division"/>
    <property type="evidence" value="ECO:0007669"/>
    <property type="project" value="UniProtKB-KW"/>
</dbReference>
<dbReference type="GO" id="GO:0007059">
    <property type="term" value="P:chromosome segregation"/>
    <property type="evidence" value="ECO:0000318"/>
    <property type="project" value="GO_Central"/>
</dbReference>
<dbReference type="GO" id="GO:0000278">
    <property type="term" value="P:mitotic cell cycle"/>
    <property type="evidence" value="ECO:0000318"/>
    <property type="project" value="GO_Central"/>
</dbReference>
<dbReference type="GO" id="GO:0007080">
    <property type="term" value="P:mitotic metaphase chromosome alignment"/>
    <property type="evidence" value="ECO:0000250"/>
    <property type="project" value="UniProtKB"/>
</dbReference>
<dbReference type="GO" id="GO:0000070">
    <property type="term" value="P:mitotic sister chromatid segregation"/>
    <property type="evidence" value="ECO:0000250"/>
    <property type="project" value="UniProtKB"/>
</dbReference>
<dbReference type="GO" id="GO:0031110">
    <property type="term" value="P:regulation of microtubule polymerization or depolymerization"/>
    <property type="evidence" value="ECO:0000250"/>
    <property type="project" value="UniProtKB"/>
</dbReference>
<dbReference type="CDD" id="cd12957">
    <property type="entry name" value="SKA3_N"/>
    <property type="match status" value="1"/>
</dbReference>
<dbReference type="Gene3D" id="6.10.250.1400">
    <property type="match status" value="1"/>
</dbReference>
<dbReference type="InterPro" id="IPR033341">
    <property type="entry name" value="SKA3"/>
</dbReference>
<dbReference type="PANTHER" id="PTHR48118">
    <property type="entry name" value="SPINDLE AND KINETOCHORE-ASSOCIATED PROTEIN 3"/>
    <property type="match status" value="1"/>
</dbReference>
<dbReference type="PANTHER" id="PTHR48118:SF1">
    <property type="entry name" value="SPINDLE AND KINETOCHORE-ASSOCIATED PROTEIN 3"/>
    <property type="match status" value="1"/>
</dbReference>
<keyword id="KW-0131">Cell cycle</keyword>
<keyword id="KW-0132">Cell division</keyword>
<keyword id="KW-0137">Centromere</keyword>
<keyword id="KW-0158">Chromosome</keyword>
<keyword id="KW-0963">Cytoplasm</keyword>
<keyword id="KW-0206">Cytoskeleton</keyword>
<keyword id="KW-0995">Kinetochore</keyword>
<keyword id="KW-0493">Microtubule</keyword>
<keyword id="KW-0498">Mitosis</keyword>
<keyword id="KW-0597">Phosphoprotein</keyword>
<keyword id="KW-1185">Reference proteome</keyword>
<comment type="function">
    <text evidence="1 2">Component of the SKA complex, a microtubule plus end-binding complex of the outer kinetochore that stabilizes spindle microtubule-kinetochore attachments, promotes alignment of chromosomes at the mitotic spindle equator (chromosome congression) and assists suppression of the spindle assembly checkpoint. Kinetochores, consisting of a centromere-associated inner segment and a microtubule-contacting outer segment, play a crucial role in chromosome segregation by mediating the physical connection between centromeric DNA and spindle microtubules. The outer kinetochore is made up of the ten-subunit KMN network complex, comprising the MIS12, NDC80 and KNL1 complexes, and auxiliary microtubule-associated components such as the SKA complex; together they connect the outer kinetochore with the inner kinetochore, bind microtubules, and mediate interactions with mitotic checkpoint proteins that delay anaphase until chromosomes are bioriented on the spindle. The SKA complex is loaded onto bioriented kinetochores and it facilitates chromosome congression by stabilizing microtubules, and end-on attachment of the NDC80 complex to depolymerizing spindle microtubules, thereby assisting the poleward-moving kinetochore in withstanding microtubule pulling forces. The complex associates with dynamic microtubule plus-ends and can track both depolymerizing and elongating microtubules. The complex recruits protein phosphatase 1 (PP1) to the kinetochore in prometaphase and metaphase, to oppose spindle assembly checkpoint signaling and promote the onset of anaphase. Within the complex, binds microtubules but with a much lower affinity than SKA1 (By similarity). During meiosis the SKA complex stabilizes the meiotic spindle and is required for its migration to the cortex (By similarity).</text>
</comment>
<comment type="subunit">
    <text evidence="2">Component of the SKA complex, composed of ska1, ska2 and ska3.</text>
</comment>
<comment type="subcellular location">
    <subcellularLocation>
        <location evidence="2">Cytoplasm</location>
        <location evidence="2">Cytoskeleton</location>
        <location evidence="2">Spindle</location>
    </subcellularLocation>
    <subcellularLocation>
        <location evidence="2">Chromosome</location>
        <location evidence="2">Centromere</location>
        <location evidence="2">Kinetochore</location>
    </subcellularLocation>
</comment>
<comment type="similarity">
    <text evidence="5">Belongs to the SKA3 family.</text>
</comment>
<organism>
    <name type="scientific">Danio rerio</name>
    <name type="common">Zebrafish</name>
    <name type="synonym">Brachydanio rerio</name>
    <dbReference type="NCBI Taxonomy" id="7955"/>
    <lineage>
        <taxon>Eukaryota</taxon>
        <taxon>Metazoa</taxon>
        <taxon>Chordata</taxon>
        <taxon>Craniata</taxon>
        <taxon>Vertebrata</taxon>
        <taxon>Euteleostomi</taxon>
        <taxon>Actinopterygii</taxon>
        <taxon>Neopterygii</taxon>
        <taxon>Teleostei</taxon>
        <taxon>Ostariophysi</taxon>
        <taxon>Cypriniformes</taxon>
        <taxon>Danionidae</taxon>
        <taxon>Danioninae</taxon>
        <taxon>Danio</taxon>
    </lineage>
</organism>